<dbReference type="EC" id="1.3.1.9" evidence="1"/>
<dbReference type="EMBL" id="BA000038">
    <property type="protein sequence ID" value="BAC96797.1"/>
    <property type="molecule type" value="Genomic_DNA"/>
</dbReference>
<dbReference type="RefSeq" id="WP_011152099.1">
    <property type="nucleotide sequence ID" value="NC_005140.1"/>
</dbReference>
<dbReference type="SMR" id="Q7ME99"/>
<dbReference type="STRING" id="672.VV93_v1c37610"/>
<dbReference type="KEGG" id="vvy:VVA0771"/>
<dbReference type="PATRIC" id="fig|196600.6.peg.3962"/>
<dbReference type="eggNOG" id="COG3007">
    <property type="taxonomic scope" value="Bacteria"/>
</dbReference>
<dbReference type="HOGENOM" id="CLU_057698_1_0_6"/>
<dbReference type="UniPathway" id="UPA00094"/>
<dbReference type="Proteomes" id="UP000002675">
    <property type="component" value="Chromosome II"/>
</dbReference>
<dbReference type="GO" id="GO:0004318">
    <property type="term" value="F:enoyl-[acyl-carrier-protein] reductase (NADH) activity"/>
    <property type="evidence" value="ECO:0007669"/>
    <property type="project" value="UniProtKB-UniRule"/>
</dbReference>
<dbReference type="GO" id="GO:0051287">
    <property type="term" value="F:NAD binding"/>
    <property type="evidence" value="ECO:0007669"/>
    <property type="project" value="UniProtKB-UniRule"/>
</dbReference>
<dbReference type="GO" id="GO:0050343">
    <property type="term" value="F:trans-2-enoyl-CoA reductase (NADH) activity"/>
    <property type="evidence" value="ECO:0007669"/>
    <property type="project" value="TreeGrafter"/>
</dbReference>
<dbReference type="GO" id="GO:0006633">
    <property type="term" value="P:fatty acid biosynthetic process"/>
    <property type="evidence" value="ECO:0007669"/>
    <property type="project" value="UniProtKB-UniRule"/>
</dbReference>
<dbReference type="Gene3D" id="3.40.50.720">
    <property type="entry name" value="NAD(P)-binding Rossmann-like Domain"/>
    <property type="match status" value="1"/>
</dbReference>
<dbReference type="HAMAP" id="MF_01838">
    <property type="entry name" value="FabV_reductase"/>
    <property type="match status" value="1"/>
</dbReference>
<dbReference type="InterPro" id="IPR024906">
    <property type="entry name" value="Eno_Rdtase_FAD-bd_dom"/>
</dbReference>
<dbReference type="InterPro" id="IPR024910">
    <property type="entry name" value="Enoyl-CoA_Rdtase_cat_dom"/>
</dbReference>
<dbReference type="InterPro" id="IPR050048">
    <property type="entry name" value="FabV-like_NADH_b"/>
</dbReference>
<dbReference type="InterPro" id="IPR036291">
    <property type="entry name" value="NAD(P)-bd_dom_sf"/>
</dbReference>
<dbReference type="InterPro" id="IPR010758">
    <property type="entry name" value="Trans-2-enoyl-CoA_reductase"/>
</dbReference>
<dbReference type="NCBIfam" id="NF043048">
    <property type="entry name" value="EnoyACPredFabV"/>
    <property type="match status" value="1"/>
</dbReference>
<dbReference type="NCBIfam" id="NF010177">
    <property type="entry name" value="PRK13656.1"/>
    <property type="match status" value="1"/>
</dbReference>
<dbReference type="PANTHER" id="PTHR37480">
    <property type="entry name" value="ENOYL-[ACYL-CARRIER-PROTEIN] REDUCTASE [NADH]"/>
    <property type="match status" value="1"/>
</dbReference>
<dbReference type="PANTHER" id="PTHR37480:SF1">
    <property type="entry name" value="ENOYL-[ACYL-CARRIER-PROTEIN] REDUCTASE [NADH]"/>
    <property type="match status" value="1"/>
</dbReference>
<dbReference type="Pfam" id="PF07055">
    <property type="entry name" value="Eno-Rase_FAD_bd"/>
    <property type="match status" value="1"/>
</dbReference>
<dbReference type="Pfam" id="PF12242">
    <property type="entry name" value="Eno-Rase_NADH_b"/>
    <property type="match status" value="1"/>
</dbReference>
<dbReference type="Pfam" id="PF12241">
    <property type="entry name" value="Enoyl_reductase"/>
    <property type="match status" value="1"/>
</dbReference>
<dbReference type="SUPFAM" id="SSF51735">
    <property type="entry name" value="NAD(P)-binding Rossmann-fold domains"/>
    <property type="match status" value="1"/>
</dbReference>
<name>FABV2_VIBVY</name>
<organism>
    <name type="scientific">Vibrio vulnificus (strain YJ016)</name>
    <dbReference type="NCBI Taxonomy" id="196600"/>
    <lineage>
        <taxon>Bacteria</taxon>
        <taxon>Pseudomonadati</taxon>
        <taxon>Pseudomonadota</taxon>
        <taxon>Gammaproteobacteria</taxon>
        <taxon>Vibrionales</taxon>
        <taxon>Vibrionaceae</taxon>
        <taxon>Vibrio</taxon>
    </lineage>
</organism>
<gene>
    <name evidence="1" type="primary">fabV2</name>
    <name type="ordered locus">VVA0771</name>
</gene>
<keyword id="KW-0275">Fatty acid biosynthesis</keyword>
<keyword id="KW-0276">Fatty acid metabolism</keyword>
<keyword id="KW-0444">Lipid biosynthesis</keyword>
<keyword id="KW-0443">Lipid metabolism</keyword>
<keyword id="KW-0520">NAD</keyword>
<keyword id="KW-0560">Oxidoreductase</keyword>
<feature type="chain" id="PRO_0000220057" description="Enoyl-[acyl-carrier-protein] reductase [NADH] 2">
    <location>
        <begin position="1"/>
        <end position="400"/>
    </location>
</feature>
<feature type="active site" description="Proton donor" evidence="1">
    <location>
        <position position="238"/>
    </location>
</feature>
<feature type="binding site" evidence="1">
    <location>
        <begin position="48"/>
        <end position="53"/>
    </location>
    <ligand>
        <name>NAD(+)</name>
        <dbReference type="ChEBI" id="CHEBI:57540"/>
    </ligand>
</feature>
<feature type="binding site" evidence="1">
    <location>
        <begin position="75"/>
        <end position="76"/>
    </location>
    <ligand>
        <name>NAD(+)</name>
        <dbReference type="ChEBI" id="CHEBI:57540"/>
    </ligand>
</feature>
<feature type="binding site" evidence="1">
    <location>
        <begin position="112"/>
        <end position="113"/>
    </location>
    <ligand>
        <name>NAD(+)</name>
        <dbReference type="ChEBI" id="CHEBI:57540"/>
    </ligand>
</feature>
<feature type="binding site" evidence="1">
    <location>
        <begin position="141"/>
        <end position="142"/>
    </location>
    <ligand>
        <name>NAD(+)</name>
        <dbReference type="ChEBI" id="CHEBI:57540"/>
    </ligand>
</feature>
<feature type="binding site" evidence="1">
    <location>
        <position position="228"/>
    </location>
    <ligand>
        <name>substrate</name>
    </ligand>
</feature>
<feature type="binding site" evidence="1">
    <location>
        <position position="247"/>
    </location>
    <ligand>
        <name>NAD(+)</name>
        <dbReference type="ChEBI" id="CHEBI:57540"/>
    </ligand>
</feature>
<feature type="binding site" evidence="1">
    <location>
        <begin position="276"/>
        <end position="278"/>
    </location>
    <ligand>
        <name>NAD(+)</name>
        <dbReference type="ChEBI" id="CHEBI:57540"/>
    </ligand>
</feature>
<feature type="site" description="Plays an important role in discriminating NADH against NADPH" evidence="1">
    <location>
        <position position="76"/>
    </location>
</feature>
<evidence type="ECO:0000255" key="1">
    <source>
        <dbReference type="HAMAP-Rule" id="MF_01838"/>
    </source>
</evidence>
<accession>Q7ME99</accession>
<protein>
    <recommendedName>
        <fullName evidence="1">Enoyl-[acyl-carrier-protein] reductase [NADH] 2</fullName>
        <shortName evidence="1">ENR 2</shortName>
        <ecNumber evidence="1">1.3.1.9</ecNumber>
    </recommendedName>
</protein>
<sequence length="400" mass="44242">MRIEPIIQGVVARSAHPFGCEAAIKKQIAFVKKAPQISQGPKRVLILGASSGFGLAARIALTFGGAQADTIGVSFERGPSEKGTGSAGWYNNVFFKREAEKEGRIAINIVGDAFASETRTQVIEAIETYFEGEVDLVIYSLATGMRPIPNQPGEFWRSVIKPFGQTVTGASLDLEHDRWIDTTLESATEEEALHTIKVMGGEDWESWIDTLINAESIAQGCQTIAFSYVGPEITHPIYLDGTLGRAKIDLHQTSHSLNLKLANFDGAAYATVCKALVTKASVFIPALSPYLLALYRVMKDEKCHEGCIEQMQRLFATKLYGQDHISVDGERLVRMDDWELAPHIQNKVNQILEEMDANNFQVIGDYQGFKNEFLQLNGFGFDEVDYSQDIDLQTILKLTP</sequence>
<reference key="1">
    <citation type="journal article" date="2003" name="Genome Res.">
        <title>Comparative genome analysis of Vibrio vulnificus, a marine pathogen.</title>
        <authorList>
            <person name="Chen C.-Y."/>
            <person name="Wu K.-M."/>
            <person name="Chang Y.-C."/>
            <person name="Chang C.-H."/>
            <person name="Tsai H.-C."/>
            <person name="Liao T.-L."/>
            <person name="Liu Y.-M."/>
            <person name="Chen H.-J."/>
            <person name="Shen A.B.-T."/>
            <person name="Li J.-C."/>
            <person name="Su T.-L."/>
            <person name="Shao C.-P."/>
            <person name="Lee C.-T."/>
            <person name="Hor L.-I."/>
            <person name="Tsai S.-F."/>
        </authorList>
    </citation>
    <scope>NUCLEOTIDE SEQUENCE [LARGE SCALE GENOMIC DNA]</scope>
    <source>
        <strain>YJ016</strain>
    </source>
</reference>
<comment type="function">
    <text evidence="1">Involved in the final reduction of the elongation cycle of fatty acid synthesis (FAS II). Catalyzes the reduction of a carbon-carbon double bond in an enoyl moiety that is covalently linked to an acyl carrier protein (ACP).</text>
</comment>
<comment type="catalytic activity">
    <reaction evidence="1">
        <text>a 2,3-saturated acyl-[ACP] + NAD(+) = a (2E)-enoyl-[ACP] + NADH + H(+)</text>
        <dbReference type="Rhea" id="RHEA:10240"/>
        <dbReference type="Rhea" id="RHEA-COMP:9925"/>
        <dbReference type="Rhea" id="RHEA-COMP:9926"/>
        <dbReference type="ChEBI" id="CHEBI:15378"/>
        <dbReference type="ChEBI" id="CHEBI:57540"/>
        <dbReference type="ChEBI" id="CHEBI:57945"/>
        <dbReference type="ChEBI" id="CHEBI:78784"/>
        <dbReference type="ChEBI" id="CHEBI:78785"/>
        <dbReference type="EC" id="1.3.1.9"/>
    </reaction>
</comment>
<comment type="pathway">
    <text evidence="1">Lipid metabolism; fatty acid biosynthesis.</text>
</comment>
<comment type="subunit">
    <text evidence="1">Monomer.</text>
</comment>
<comment type="similarity">
    <text evidence="1">Belongs to the TER reductase family.</text>
</comment>
<proteinExistence type="inferred from homology"/>